<organism>
    <name type="scientific">Pyrobaculum calidifontis (strain DSM 21063 / JCM 11548 / VA1)</name>
    <dbReference type="NCBI Taxonomy" id="410359"/>
    <lineage>
        <taxon>Archaea</taxon>
        <taxon>Thermoproteota</taxon>
        <taxon>Thermoprotei</taxon>
        <taxon>Thermoproteales</taxon>
        <taxon>Thermoproteaceae</taxon>
        <taxon>Pyrobaculum</taxon>
    </lineage>
</organism>
<dbReference type="EC" id="2.8.1.8" evidence="1"/>
<dbReference type="EMBL" id="CP000561">
    <property type="protein sequence ID" value="ABO08826.1"/>
    <property type="molecule type" value="Genomic_DNA"/>
</dbReference>
<dbReference type="RefSeq" id="WP_011850084.1">
    <property type="nucleotide sequence ID" value="NC_009073.1"/>
</dbReference>
<dbReference type="SMR" id="A3MW09"/>
<dbReference type="STRING" id="410359.Pcal_1406"/>
<dbReference type="GeneID" id="4909119"/>
<dbReference type="KEGG" id="pcl:Pcal_1406"/>
<dbReference type="eggNOG" id="arCOG00660">
    <property type="taxonomic scope" value="Archaea"/>
</dbReference>
<dbReference type="HOGENOM" id="CLU_033144_2_3_2"/>
<dbReference type="UniPathway" id="UPA00538">
    <property type="reaction ID" value="UER00593"/>
</dbReference>
<dbReference type="Proteomes" id="UP000001431">
    <property type="component" value="Chromosome"/>
</dbReference>
<dbReference type="GO" id="GO:0005737">
    <property type="term" value="C:cytoplasm"/>
    <property type="evidence" value="ECO:0007669"/>
    <property type="project" value="UniProtKB-SubCell"/>
</dbReference>
<dbReference type="GO" id="GO:0051539">
    <property type="term" value="F:4 iron, 4 sulfur cluster binding"/>
    <property type="evidence" value="ECO:0007669"/>
    <property type="project" value="UniProtKB-UniRule"/>
</dbReference>
<dbReference type="GO" id="GO:0016992">
    <property type="term" value="F:lipoate synthase activity"/>
    <property type="evidence" value="ECO:0007669"/>
    <property type="project" value="UniProtKB-UniRule"/>
</dbReference>
<dbReference type="GO" id="GO:0046872">
    <property type="term" value="F:metal ion binding"/>
    <property type="evidence" value="ECO:0007669"/>
    <property type="project" value="UniProtKB-KW"/>
</dbReference>
<dbReference type="CDD" id="cd01335">
    <property type="entry name" value="Radical_SAM"/>
    <property type="match status" value="1"/>
</dbReference>
<dbReference type="Gene3D" id="3.20.20.70">
    <property type="entry name" value="Aldolase class I"/>
    <property type="match status" value="1"/>
</dbReference>
<dbReference type="HAMAP" id="MF_00206">
    <property type="entry name" value="Lipoyl_synth"/>
    <property type="match status" value="1"/>
</dbReference>
<dbReference type="InterPro" id="IPR013785">
    <property type="entry name" value="Aldolase_TIM"/>
</dbReference>
<dbReference type="InterPro" id="IPR006638">
    <property type="entry name" value="Elp3/MiaA/NifB-like_rSAM"/>
</dbReference>
<dbReference type="InterPro" id="IPR003698">
    <property type="entry name" value="Lipoyl_synth"/>
</dbReference>
<dbReference type="InterPro" id="IPR007197">
    <property type="entry name" value="rSAM"/>
</dbReference>
<dbReference type="NCBIfam" id="TIGR00510">
    <property type="entry name" value="lipA"/>
    <property type="match status" value="1"/>
</dbReference>
<dbReference type="NCBIfam" id="NF004019">
    <property type="entry name" value="PRK05481.1"/>
    <property type="match status" value="1"/>
</dbReference>
<dbReference type="NCBIfam" id="NF009544">
    <property type="entry name" value="PRK12928.1"/>
    <property type="match status" value="1"/>
</dbReference>
<dbReference type="PANTHER" id="PTHR10949">
    <property type="entry name" value="LIPOYL SYNTHASE"/>
    <property type="match status" value="1"/>
</dbReference>
<dbReference type="PANTHER" id="PTHR10949:SF0">
    <property type="entry name" value="LIPOYL SYNTHASE, MITOCHONDRIAL"/>
    <property type="match status" value="1"/>
</dbReference>
<dbReference type="Pfam" id="PF04055">
    <property type="entry name" value="Radical_SAM"/>
    <property type="match status" value="1"/>
</dbReference>
<dbReference type="PIRSF" id="PIRSF005963">
    <property type="entry name" value="Lipoyl_synth"/>
    <property type="match status" value="1"/>
</dbReference>
<dbReference type="SFLD" id="SFLDF00271">
    <property type="entry name" value="lipoyl_synthase"/>
    <property type="match status" value="1"/>
</dbReference>
<dbReference type="SFLD" id="SFLDG01058">
    <property type="entry name" value="lipoyl_synthase_like"/>
    <property type="match status" value="1"/>
</dbReference>
<dbReference type="SMART" id="SM00729">
    <property type="entry name" value="Elp3"/>
    <property type="match status" value="1"/>
</dbReference>
<dbReference type="SUPFAM" id="SSF102114">
    <property type="entry name" value="Radical SAM enzymes"/>
    <property type="match status" value="1"/>
</dbReference>
<dbReference type="PROSITE" id="PS51918">
    <property type="entry name" value="RADICAL_SAM"/>
    <property type="match status" value="1"/>
</dbReference>
<accession>A3MW09</accession>
<keyword id="KW-0004">4Fe-4S</keyword>
<keyword id="KW-0963">Cytoplasm</keyword>
<keyword id="KW-0408">Iron</keyword>
<keyword id="KW-0411">Iron-sulfur</keyword>
<keyword id="KW-0479">Metal-binding</keyword>
<keyword id="KW-0949">S-adenosyl-L-methionine</keyword>
<keyword id="KW-0808">Transferase</keyword>
<sequence length="291" mass="31867">MELPSWIRVKAGDYGRIVAVREAVFAAGVHTICEEAHCPNIFSCWGEGTATFLILGDVCTRACKFCAVKTGDPRGFVDPTEPARVAEAVAKLGLRYVVITSVDRDDLPDGGASQFASVVKAVKARAPWAKVEVLTPDFGGSAEAVASVVEAGPDVYAHNLETVRRLTPLVRDRRASYDVSLRVLKMAKELGAVTKSGLMVGLGETFDEVLEALSDLRRVDVDIVTIGQYLKPRGHKRFLEVQRWVPPEEFEKYREAAEAMGFKAVVAGPLVRSSYKAHEAYLEMLRKTIGR</sequence>
<proteinExistence type="inferred from homology"/>
<reference key="1">
    <citation type="submission" date="2007-02" db="EMBL/GenBank/DDBJ databases">
        <title>Complete sequence of Pyrobaculum calidifontis JCM 11548.</title>
        <authorList>
            <consortium name="US DOE Joint Genome Institute"/>
            <person name="Copeland A."/>
            <person name="Lucas S."/>
            <person name="Lapidus A."/>
            <person name="Barry K."/>
            <person name="Glavina del Rio T."/>
            <person name="Dalin E."/>
            <person name="Tice H."/>
            <person name="Pitluck S."/>
            <person name="Chain P."/>
            <person name="Malfatti S."/>
            <person name="Shin M."/>
            <person name="Vergez L."/>
            <person name="Schmutz J."/>
            <person name="Larimer F."/>
            <person name="Land M."/>
            <person name="Hauser L."/>
            <person name="Kyrpides N."/>
            <person name="Mikhailova N."/>
            <person name="Cozen A.E."/>
            <person name="Fitz-Gibbon S.T."/>
            <person name="House C.H."/>
            <person name="Saltikov C."/>
            <person name="Lowe T.M."/>
            <person name="Richardson P."/>
        </authorList>
    </citation>
    <scope>NUCLEOTIDE SEQUENCE [LARGE SCALE GENOMIC DNA]</scope>
    <source>
        <strain>DSM 21063 / JCM 11548 / VA1</strain>
    </source>
</reference>
<evidence type="ECO:0000255" key="1">
    <source>
        <dbReference type="HAMAP-Rule" id="MF_00206"/>
    </source>
</evidence>
<evidence type="ECO:0000255" key="2">
    <source>
        <dbReference type="PROSITE-ProRule" id="PRU01266"/>
    </source>
</evidence>
<protein>
    <recommendedName>
        <fullName evidence="1">Lipoyl synthase</fullName>
        <ecNumber evidence="1">2.8.1.8</ecNumber>
    </recommendedName>
    <alternativeName>
        <fullName evidence="1">Lip-syn</fullName>
        <shortName evidence="1">LS</shortName>
    </alternativeName>
    <alternativeName>
        <fullName evidence="1">Lipoate synthase</fullName>
    </alternativeName>
    <alternativeName>
        <fullName evidence="1">Lipoic acid synthase</fullName>
    </alternativeName>
    <alternativeName>
        <fullName evidence="1">Sulfur insertion protein LipA</fullName>
    </alternativeName>
</protein>
<feature type="chain" id="PRO_0000325324" description="Lipoyl synthase">
    <location>
        <begin position="1"/>
        <end position="291"/>
    </location>
</feature>
<feature type="domain" description="Radical SAM core" evidence="2">
    <location>
        <begin position="45"/>
        <end position="263"/>
    </location>
</feature>
<feature type="binding site" evidence="1">
    <location>
        <position position="33"/>
    </location>
    <ligand>
        <name>[4Fe-4S] cluster</name>
        <dbReference type="ChEBI" id="CHEBI:49883"/>
        <label>1</label>
    </ligand>
</feature>
<feature type="binding site" evidence="1">
    <location>
        <position position="38"/>
    </location>
    <ligand>
        <name>[4Fe-4S] cluster</name>
        <dbReference type="ChEBI" id="CHEBI:49883"/>
        <label>1</label>
    </ligand>
</feature>
<feature type="binding site" evidence="1">
    <location>
        <position position="44"/>
    </location>
    <ligand>
        <name>[4Fe-4S] cluster</name>
        <dbReference type="ChEBI" id="CHEBI:49883"/>
        <label>1</label>
    </ligand>
</feature>
<feature type="binding site" evidence="1">
    <location>
        <position position="59"/>
    </location>
    <ligand>
        <name>[4Fe-4S] cluster</name>
        <dbReference type="ChEBI" id="CHEBI:49883"/>
        <label>2</label>
        <note>4Fe-4S-S-AdoMet</note>
    </ligand>
</feature>
<feature type="binding site" evidence="1">
    <location>
        <position position="63"/>
    </location>
    <ligand>
        <name>[4Fe-4S] cluster</name>
        <dbReference type="ChEBI" id="CHEBI:49883"/>
        <label>2</label>
        <note>4Fe-4S-S-AdoMet</note>
    </ligand>
</feature>
<feature type="binding site" evidence="1">
    <location>
        <position position="66"/>
    </location>
    <ligand>
        <name>[4Fe-4S] cluster</name>
        <dbReference type="ChEBI" id="CHEBI:49883"/>
        <label>2</label>
        <note>4Fe-4S-S-AdoMet</note>
    </ligand>
</feature>
<feature type="binding site" evidence="1">
    <location>
        <position position="274"/>
    </location>
    <ligand>
        <name>[4Fe-4S] cluster</name>
        <dbReference type="ChEBI" id="CHEBI:49883"/>
        <label>1</label>
    </ligand>
</feature>
<gene>
    <name evidence="1" type="primary">lipA</name>
    <name type="ordered locus">Pcal_1406</name>
</gene>
<name>LIPA_PYRCJ</name>
<comment type="function">
    <text evidence="1">Catalyzes the radical-mediated insertion of two sulfur atoms into the C-6 and C-8 positions of the octanoyl moiety bound to the lipoyl domains of lipoate-dependent enzymes, thereby converting the octanoylated domains into lipoylated derivatives.</text>
</comment>
<comment type="catalytic activity">
    <reaction evidence="1">
        <text>[[Fe-S] cluster scaffold protein carrying a second [4Fe-4S](2+) cluster] + N(6)-octanoyl-L-lysyl-[protein] + 2 oxidized [2Fe-2S]-[ferredoxin] + 2 S-adenosyl-L-methionine + 4 H(+) = [[Fe-S] cluster scaffold protein] + N(6)-[(R)-dihydrolipoyl]-L-lysyl-[protein] + 4 Fe(3+) + 2 hydrogen sulfide + 2 5'-deoxyadenosine + 2 L-methionine + 2 reduced [2Fe-2S]-[ferredoxin]</text>
        <dbReference type="Rhea" id="RHEA:16585"/>
        <dbReference type="Rhea" id="RHEA-COMP:9928"/>
        <dbReference type="Rhea" id="RHEA-COMP:10000"/>
        <dbReference type="Rhea" id="RHEA-COMP:10001"/>
        <dbReference type="Rhea" id="RHEA-COMP:10475"/>
        <dbReference type="Rhea" id="RHEA-COMP:14568"/>
        <dbReference type="Rhea" id="RHEA-COMP:14569"/>
        <dbReference type="ChEBI" id="CHEBI:15378"/>
        <dbReference type="ChEBI" id="CHEBI:17319"/>
        <dbReference type="ChEBI" id="CHEBI:29034"/>
        <dbReference type="ChEBI" id="CHEBI:29919"/>
        <dbReference type="ChEBI" id="CHEBI:33722"/>
        <dbReference type="ChEBI" id="CHEBI:33737"/>
        <dbReference type="ChEBI" id="CHEBI:33738"/>
        <dbReference type="ChEBI" id="CHEBI:57844"/>
        <dbReference type="ChEBI" id="CHEBI:59789"/>
        <dbReference type="ChEBI" id="CHEBI:78809"/>
        <dbReference type="ChEBI" id="CHEBI:83100"/>
        <dbReference type="EC" id="2.8.1.8"/>
    </reaction>
</comment>
<comment type="cofactor">
    <cofactor evidence="1">
        <name>[4Fe-4S] cluster</name>
        <dbReference type="ChEBI" id="CHEBI:49883"/>
    </cofactor>
    <text evidence="1">Binds 2 [4Fe-4S] clusters per subunit. One cluster is coordinated with 3 cysteines and an exchangeable S-adenosyl-L-methionine.</text>
</comment>
<comment type="pathway">
    <text evidence="1">Protein modification; protein lipoylation via endogenous pathway; protein N(6)-(lipoyl)lysine from octanoyl-[acyl-carrier-protein]: step 2/2.</text>
</comment>
<comment type="subcellular location">
    <subcellularLocation>
        <location evidence="1">Cytoplasm</location>
    </subcellularLocation>
</comment>
<comment type="similarity">
    <text evidence="1">Belongs to the radical SAM superfamily. Lipoyl synthase family.</text>
</comment>